<feature type="chain" id="PRO_1000046980" description="UPF0340 protein SAOUHSC_02355">
    <location>
        <begin position="1"/>
        <end position="174"/>
    </location>
</feature>
<sequence>MKDLTMLLDELKDMSFFNKGDICLIGCSTSEVIGEKIGTVGSMEVAETIFNALDVVSKETGVTFAFQGCEHINRAITIEKSQYNPLTMEEVSVVPDVHAGGSLATYAFQHMKDPIVVEHITVPCGIDIGQTLIGMHIKHVCVPVRTSVKQVGQAIVTIATSRPKKIGGERAKYQ</sequence>
<dbReference type="EMBL" id="CP000253">
    <property type="protein sequence ID" value="ABD31386.1"/>
    <property type="molecule type" value="Genomic_DNA"/>
</dbReference>
<dbReference type="RefSeq" id="WP_000654185.1">
    <property type="nucleotide sequence ID" value="NZ_LS483365.1"/>
</dbReference>
<dbReference type="RefSeq" id="YP_500831.1">
    <property type="nucleotide sequence ID" value="NC_007795.1"/>
</dbReference>
<dbReference type="PDB" id="7Z06">
    <property type="method" value="X-ray"/>
    <property type="resolution" value="1.74 A"/>
    <property type="chains" value="A/B/C/D/E/F=2-174"/>
</dbReference>
<dbReference type="PDBsum" id="7Z06"/>
<dbReference type="SMR" id="Q2FWE4"/>
<dbReference type="STRING" id="93061.SAOUHSC_02355"/>
<dbReference type="PaxDb" id="1280-SAXN108_2359"/>
<dbReference type="GeneID" id="3919398"/>
<dbReference type="KEGG" id="sao:SAOUHSC_02355"/>
<dbReference type="PATRIC" id="fig|93061.5.peg.2132"/>
<dbReference type="eggNOG" id="COG4475">
    <property type="taxonomic scope" value="Bacteria"/>
</dbReference>
<dbReference type="HOGENOM" id="CLU_106658_0_0_9"/>
<dbReference type="OrthoDB" id="9803187at2"/>
<dbReference type="PRO" id="PR:Q2FWE4"/>
<dbReference type="Proteomes" id="UP000008816">
    <property type="component" value="Chromosome"/>
</dbReference>
<dbReference type="Gene3D" id="3.40.50.10360">
    <property type="entry name" value="Hypothetical protein TT1679"/>
    <property type="match status" value="1"/>
</dbReference>
<dbReference type="HAMAP" id="MF_00800">
    <property type="entry name" value="UPF0340"/>
    <property type="match status" value="1"/>
</dbReference>
<dbReference type="InterPro" id="IPR028345">
    <property type="entry name" value="Antibiotic_NAT-like"/>
</dbReference>
<dbReference type="InterPro" id="IPR006340">
    <property type="entry name" value="DUF436"/>
</dbReference>
<dbReference type="NCBIfam" id="TIGR01440">
    <property type="entry name" value="TIGR01440 family protein"/>
    <property type="match status" value="1"/>
</dbReference>
<dbReference type="Pfam" id="PF04260">
    <property type="entry name" value="DUF436"/>
    <property type="match status" value="1"/>
</dbReference>
<dbReference type="PIRSF" id="PIRSF007510">
    <property type="entry name" value="UCP007510"/>
    <property type="match status" value="1"/>
</dbReference>
<dbReference type="SUPFAM" id="SSF110710">
    <property type="entry name" value="TTHA0583/YokD-like"/>
    <property type="match status" value="1"/>
</dbReference>
<accession>Q2FWE4</accession>
<keyword id="KW-0002">3D-structure</keyword>
<keyword id="KW-1185">Reference proteome</keyword>
<comment type="similarity">
    <text evidence="1">Belongs to the UPF0340 family.</text>
</comment>
<gene>
    <name type="ordered locus">SAOUHSC_02355</name>
</gene>
<organism>
    <name type="scientific">Staphylococcus aureus (strain NCTC 8325 / PS 47)</name>
    <dbReference type="NCBI Taxonomy" id="93061"/>
    <lineage>
        <taxon>Bacteria</taxon>
        <taxon>Bacillati</taxon>
        <taxon>Bacillota</taxon>
        <taxon>Bacilli</taxon>
        <taxon>Bacillales</taxon>
        <taxon>Staphylococcaceae</taxon>
        <taxon>Staphylococcus</taxon>
    </lineage>
</organism>
<name>Y2355_STAA8</name>
<protein>
    <recommendedName>
        <fullName evidence="1">UPF0340 protein SAOUHSC_02355</fullName>
    </recommendedName>
</protein>
<evidence type="ECO:0000255" key="1">
    <source>
        <dbReference type="HAMAP-Rule" id="MF_00800"/>
    </source>
</evidence>
<proteinExistence type="evidence at protein level"/>
<reference key="1">
    <citation type="book" date="2006" name="Gram positive pathogens, 2nd edition">
        <title>The Staphylococcus aureus NCTC 8325 genome.</title>
        <editorList>
            <person name="Fischetti V."/>
            <person name="Novick R."/>
            <person name="Ferretti J."/>
            <person name="Portnoy D."/>
            <person name="Rood J."/>
        </editorList>
        <authorList>
            <person name="Gillaspy A.F."/>
            <person name="Worrell V."/>
            <person name="Orvis J."/>
            <person name="Roe B.A."/>
            <person name="Dyer D.W."/>
            <person name="Iandolo J.J."/>
        </authorList>
    </citation>
    <scope>NUCLEOTIDE SEQUENCE [LARGE SCALE GENOMIC DNA]</scope>
    <source>
        <strain>NCTC 8325 / PS 47</strain>
    </source>
</reference>